<proteinExistence type="inferred from homology"/>
<evidence type="ECO:0000255" key="1">
    <source>
        <dbReference type="HAMAP-Rule" id="MF_00558"/>
    </source>
</evidence>
<protein>
    <recommendedName>
        <fullName evidence="1">Succinate--CoA ligase [ADP-forming] subunit beta</fullName>
        <ecNumber evidence="1">6.2.1.5</ecNumber>
    </recommendedName>
    <alternativeName>
        <fullName evidence="1">Succinyl-CoA synthetase subunit beta</fullName>
        <shortName evidence="1">SCS-beta</shortName>
    </alternativeName>
</protein>
<reference key="1">
    <citation type="journal article" date="2007" name="Nat. Genet.">
        <title>Genomic analysis of Bartonella identifies type IV secretion systems as host adaptability factors.</title>
        <authorList>
            <person name="Saenz H.L."/>
            <person name="Engel P."/>
            <person name="Stoeckli M.C."/>
            <person name="Lanz C."/>
            <person name="Raddatz G."/>
            <person name="Vayssier-Taussat M."/>
            <person name="Birtles R."/>
            <person name="Schuster S.C."/>
            <person name="Dehio C."/>
        </authorList>
    </citation>
    <scope>NUCLEOTIDE SEQUENCE [LARGE SCALE GENOMIC DNA]</scope>
    <source>
        <strain>CIP 105476 / IBS 506</strain>
    </source>
</reference>
<gene>
    <name evidence="1" type="primary">sucC</name>
    <name type="ordered locus">BT_2678</name>
</gene>
<dbReference type="EC" id="6.2.1.5" evidence="1"/>
<dbReference type="EMBL" id="AM260525">
    <property type="protein sequence ID" value="CAK02625.1"/>
    <property type="molecule type" value="Genomic_DNA"/>
</dbReference>
<dbReference type="RefSeq" id="WP_012232618.1">
    <property type="nucleotide sequence ID" value="NC_010161.1"/>
</dbReference>
<dbReference type="SMR" id="A9IZV3"/>
<dbReference type="KEGG" id="btr:BT_2678"/>
<dbReference type="eggNOG" id="COG0045">
    <property type="taxonomic scope" value="Bacteria"/>
</dbReference>
<dbReference type="HOGENOM" id="CLU_037430_0_2_5"/>
<dbReference type="UniPathway" id="UPA00223">
    <property type="reaction ID" value="UER00999"/>
</dbReference>
<dbReference type="Proteomes" id="UP000001592">
    <property type="component" value="Chromosome"/>
</dbReference>
<dbReference type="GO" id="GO:0005829">
    <property type="term" value="C:cytosol"/>
    <property type="evidence" value="ECO:0007669"/>
    <property type="project" value="TreeGrafter"/>
</dbReference>
<dbReference type="GO" id="GO:0042709">
    <property type="term" value="C:succinate-CoA ligase complex"/>
    <property type="evidence" value="ECO:0007669"/>
    <property type="project" value="TreeGrafter"/>
</dbReference>
<dbReference type="GO" id="GO:0005524">
    <property type="term" value="F:ATP binding"/>
    <property type="evidence" value="ECO:0007669"/>
    <property type="project" value="UniProtKB-UniRule"/>
</dbReference>
<dbReference type="GO" id="GO:0000287">
    <property type="term" value="F:magnesium ion binding"/>
    <property type="evidence" value="ECO:0007669"/>
    <property type="project" value="UniProtKB-UniRule"/>
</dbReference>
<dbReference type="GO" id="GO:0004775">
    <property type="term" value="F:succinate-CoA ligase (ADP-forming) activity"/>
    <property type="evidence" value="ECO:0007669"/>
    <property type="project" value="UniProtKB-UniRule"/>
</dbReference>
<dbReference type="GO" id="GO:0004776">
    <property type="term" value="F:succinate-CoA ligase (GDP-forming) activity"/>
    <property type="evidence" value="ECO:0007669"/>
    <property type="project" value="RHEA"/>
</dbReference>
<dbReference type="GO" id="GO:0006104">
    <property type="term" value="P:succinyl-CoA metabolic process"/>
    <property type="evidence" value="ECO:0007669"/>
    <property type="project" value="TreeGrafter"/>
</dbReference>
<dbReference type="GO" id="GO:0006099">
    <property type="term" value="P:tricarboxylic acid cycle"/>
    <property type="evidence" value="ECO:0007669"/>
    <property type="project" value="UniProtKB-UniRule"/>
</dbReference>
<dbReference type="FunFam" id="3.30.1490.20:FF:000002">
    <property type="entry name" value="Succinate--CoA ligase [ADP-forming] subunit beta"/>
    <property type="match status" value="1"/>
</dbReference>
<dbReference type="FunFam" id="3.30.470.20:FF:000002">
    <property type="entry name" value="Succinate--CoA ligase [ADP-forming] subunit beta"/>
    <property type="match status" value="1"/>
</dbReference>
<dbReference type="FunFam" id="3.40.50.261:FF:000001">
    <property type="entry name" value="Succinate--CoA ligase [ADP-forming] subunit beta"/>
    <property type="match status" value="1"/>
</dbReference>
<dbReference type="Gene3D" id="3.30.1490.20">
    <property type="entry name" value="ATP-grasp fold, A domain"/>
    <property type="match status" value="1"/>
</dbReference>
<dbReference type="Gene3D" id="3.30.470.20">
    <property type="entry name" value="ATP-grasp fold, B domain"/>
    <property type="match status" value="1"/>
</dbReference>
<dbReference type="Gene3D" id="3.40.50.261">
    <property type="entry name" value="Succinyl-CoA synthetase domains"/>
    <property type="match status" value="1"/>
</dbReference>
<dbReference type="HAMAP" id="MF_00558">
    <property type="entry name" value="Succ_CoA_beta"/>
    <property type="match status" value="1"/>
</dbReference>
<dbReference type="InterPro" id="IPR011761">
    <property type="entry name" value="ATP-grasp"/>
</dbReference>
<dbReference type="InterPro" id="IPR013650">
    <property type="entry name" value="ATP-grasp_succ-CoA_synth-type"/>
</dbReference>
<dbReference type="InterPro" id="IPR013815">
    <property type="entry name" value="ATP_grasp_subdomain_1"/>
</dbReference>
<dbReference type="InterPro" id="IPR017866">
    <property type="entry name" value="Succ-CoA_synthase_bsu_CS"/>
</dbReference>
<dbReference type="InterPro" id="IPR005811">
    <property type="entry name" value="SUCC_ACL_C"/>
</dbReference>
<dbReference type="InterPro" id="IPR005809">
    <property type="entry name" value="Succ_CoA_ligase-like_bsu"/>
</dbReference>
<dbReference type="InterPro" id="IPR016102">
    <property type="entry name" value="Succinyl-CoA_synth-like"/>
</dbReference>
<dbReference type="NCBIfam" id="NF001913">
    <property type="entry name" value="PRK00696.1"/>
    <property type="match status" value="1"/>
</dbReference>
<dbReference type="NCBIfam" id="TIGR01016">
    <property type="entry name" value="sucCoAbeta"/>
    <property type="match status" value="1"/>
</dbReference>
<dbReference type="PANTHER" id="PTHR11815:SF10">
    <property type="entry name" value="SUCCINATE--COA LIGASE [GDP-FORMING] SUBUNIT BETA, MITOCHONDRIAL"/>
    <property type="match status" value="1"/>
</dbReference>
<dbReference type="PANTHER" id="PTHR11815">
    <property type="entry name" value="SUCCINYL-COA SYNTHETASE BETA CHAIN"/>
    <property type="match status" value="1"/>
</dbReference>
<dbReference type="Pfam" id="PF08442">
    <property type="entry name" value="ATP-grasp_2"/>
    <property type="match status" value="1"/>
</dbReference>
<dbReference type="Pfam" id="PF00549">
    <property type="entry name" value="Ligase_CoA"/>
    <property type="match status" value="1"/>
</dbReference>
<dbReference type="PIRSF" id="PIRSF001554">
    <property type="entry name" value="SucCS_beta"/>
    <property type="match status" value="1"/>
</dbReference>
<dbReference type="SUPFAM" id="SSF56059">
    <property type="entry name" value="Glutathione synthetase ATP-binding domain-like"/>
    <property type="match status" value="1"/>
</dbReference>
<dbReference type="SUPFAM" id="SSF52210">
    <property type="entry name" value="Succinyl-CoA synthetase domains"/>
    <property type="match status" value="1"/>
</dbReference>
<dbReference type="PROSITE" id="PS50975">
    <property type="entry name" value="ATP_GRASP"/>
    <property type="match status" value="1"/>
</dbReference>
<dbReference type="PROSITE" id="PS01217">
    <property type="entry name" value="SUCCINYL_COA_LIG_3"/>
    <property type="match status" value="1"/>
</dbReference>
<name>SUCC_BART1</name>
<keyword id="KW-0067">ATP-binding</keyword>
<keyword id="KW-0436">Ligase</keyword>
<keyword id="KW-0460">Magnesium</keyword>
<keyword id="KW-0479">Metal-binding</keyword>
<keyword id="KW-0547">Nucleotide-binding</keyword>
<keyword id="KW-0816">Tricarboxylic acid cycle</keyword>
<accession>A9IZV3</accession>
<comment type="function">
    <text evidence="1">Succinyl-CoA synthetase functions in the citric acid cycle (TCA), coupling the hydrolysis of succinyl-CoA to the synthesis of either ATP or GTP and thus represents the only step of substrate-level phosphorylation in the TCA. The beta subunit provides nucleotide specificity of the enzyme and binds the substrate succinate, while the binding sites for coenzyme A and phosphate are found in the alpha subunit.</text>
</comment>
<comment type="catalytic activity">
    <reaction evidence="1">
        <text>succinate + ATP + CoA = succinyl-CoA + ADP + phosphate</text>
        <dbReference type="Rhea" id="RHEA:17661"/>
        <dbReference type="ChEBI" id="CHEBI:30031"/>
        <dbReference type="ChEBI" id="CHEBI:30616"/>
        <dbReference type="ChEBI" id="CHEBI:43474"/>
        <dbReference type="ChEBI" id="CHEBI:57287"/>
        <dbReference type="ChEBI" id="CHEBI:57292"/>
        <dbReference type="ChEBI" id="CHEBI:456216"/>
        <dbReference type="EC" id="6.2.1.5"/>
    </reaction>
    <physiologicalReaction direction="right-to-left" evidence="1">
        <dbReference type="Rhea" id="RHEA:17663"/>
    </physiologicalReaction>
</comment>
<comment type="catalytic activity">
    <reaction evidence="1">
        <text>GTP + succinate + CoA = succinyl-CoA + GDP + phosphate</text>
        <dbReference type="Rhea" id="RHEA:22120"/>
        <dbReference type="ChEBI" id="CHEBI:30031"/>
        <dbReference type="ChEBI" id="CHEBI:37565"/>
        <dbReference type="ChEBI" id="CHEBI:43474"/>
        <dbReference type="ChEBI" id="CHEBI:57287"/>
        <dbReference type="ChEBI" id="CHEBI:57292"/>
        <dbReference type="ChEBI" id="CHEBI:58189"/>
    </reaction>
    <physiologicalReaction direction="right-to-left" evidence="1">
        <dbReference type="Rhea" id="RHEA:22122"/>
    </physiologicalReaction>
</comment>
<comment type="cofactor">
    <cofactor evidence="1">
        <name>Mg(2+)</name>
        <dbReference type="ChEBI" id="CHEBI:18420"/>
    </cofactor>
    <text evidence="1">Binds 1 Mg(2+) ion per subunit.</text>
</comment>
<comment type="pathway">
    <text evidence="1">Carbohydrate metabolism; tricarboxylic acid cycle; succinate from succinyl-CoA (ligase route): step 1/1.</text>
</comment>
<comment type="subunit">
    <text evidence="1">Heterotetramer of two alpha and two beta subunits.</text>
</comment>
<comment type="similarity">
    <text evidence="1">Belongs to the succinate/malate CoA ligase beta subunit family.</text>
</comment>
<sequence>MNIHEYQAKRLLHEYGAPIANGVAVYSIEQAEKWAKKLPGPLYVVKSQIHAGGRGKGQFKELGPDAKGGVRLAQSVEEVVANVQEMLGKTLVTKQTGPEGKQVNRLYIEDGADIERELYLSLLVDRSVGRIAFVVSTEGGMDIETVAEETPEKIFTLPIDVTEGVTSADCARLCDALELHDSAREDGEKLFPILYKAFCEKDMSLLEINPLIVMKDGHLRVLDAKVSFDNNALFRHPDILELRDLSEEDPKEIEASKHDLAYVALEGTIGCMVNGAGLAMATMDIIKLYGAEPANFLDVGGGASKEKVTAAFKIITADPNVKGILVNIFGGIMRCDVIAEGVVAAVREVGLKVPLVVRLEGTNVEQGKAIINDSGLNVIPADDLDDAAQKIVAAVKGA</sequence>
<feature type="chain" id="PRO_1000082021" description="Succinate--CoA ligase [ADP-forming] subunit beta">
    <location>
        <begin position="1"/>
        <end position="398"/>
    </location>
</feature>
<feature type="domain" description="ATP-grasp" evidence="1">
    <location>
        <begin position="9"/>
        <end position="254"/>
    </location>
</feature>
<feature type="binding site" evidence="1">
    <location>
        <position position="46"/>
    </location>
    <ligand>
        <name>ATP</name>
        <dbReference type="ChEBI" id="CHEBI:30616"/>
    </ligand>
</feature>
<feature type="binding site" evidence="1">
    <location>
        <begin position="53"/>
        <end position="55"/>
    </location>
    <ligand>
        <name>ATP</name>
        <dbReference type="ChEBI" id="CHEBI:30616"/>
    </ligand>
</feature>
<feature type="binding site" evidence="1">
    <location>
        <position position="109"/>
    </location>
    <ligand>
        <name>ATP</name>
        <dbReference type="ChEBI" id="CHEBI:30616"/>
    </ligand>
</feature>
<feature type="binding site" evidence="1">
    <location>
        <position position="112"/>
    </location>
    <ligand>
        <name>ATP</name>
        <dbReference type="ChEBI" id="CHEBI:30616"/>
    </ligand>
</feature>
<feature type="binding site" evidence="1">
    <location>
        <position position="117"/>
    </location>
    <ligand>
        <name>ATP</name>
        <dbReference type="ChEBI" id="CHEBI:30616"/>
    </ligand>
</feature>
<feature type="binding site" evidence="1">
    <location>
        <position position="209"/>
    </location>
    <ligand>
        <name>Mg(2+)</name>
        <dbReference type="ChEBI" id="CHEBI:18420"/>
    </ligand>
</feature>
<feature type="binding site" evidence="1">
    <location>
        <position position="223"/>
    </location>
    <ligand>
        <name>Mg(2+)</name>
        <dbReference type="ChEBI" id="CHEBI:18420"/>
    </ligand>
</feature>
<feature type="binding site" evidence="1">
    <location>
        <position position="274"/>
    </location>
    <ligand>
        <name>substrate</name>
        <note>ligand shared with subunit alpha</note>
    </ligand>
</feature>
<feature type="binding site" evidence="1">
    <location>
        <begin position="331"/>
        <end position="333"/>
    </location>
    <ligand>
        <name>substrate</name>
        <note>ligand shared with subunit alpha</note>
    </ligand>
</feature>
<organism>
    <name type="scientific">Bartonella tribocorum (strain CIP 105476 / IBS 506)</name>
    <dbReference type="NCBI Taxonomy" id="382640"/>
    <lineage>
        <taxon>Bacteria</taxon>
        <taxon>Pseudomonadati</taxon>
        <taxon>Pseudomonadota</taxon>
        <taxon>Alphaproteobacteria</taxon>
        <taxon>Hyphomicrobiales</taxon>
        <taxon>Bartonellaceae</taxon>
        <taxon>Bartonella</taxon>
    </lineage>
</organism>